<name>MRAZ_MACCJ</name>
<reference key="1">
    <citation type="journal article" date="2009" name="J. Bacteriol.">
        <title>Complete genome sequence of Macrococcus caseolyticus strain JCSCS5402, reflecting the ancestral genome of the human-pathogenic staphylococci.</title>
        <authorList>
            <person name="Baba T."/>
            <person name="Kuwahara-Arai K."/>
            <person name="Uchiyama I."/>
            <person name="Takeuchi F."/>
            <person name="Ito T."/>
            <person name="Hiramatsu K."/>
        </authorList>
    </citation>
    <scope>NUCLEOTIDE SEQUENCE [LARGE SCALE GENOMIC DNA]</scope>
    <source>
        <strain>JCSC5402</strain>
    </source>
</reference>
<gene>
    <name evidence="1" type="primary">mraZ</name>
    <name type="ordered locus">MCCL_0750</name>
</gene>
<comment type="subunit">
    <text evidence="1">Forms oligomers.</text>
</comment>
<comment type="subcellular location">
    <subcellularLocation>
        <location evidence="1">Cytoplasm</location>
        <location evidence="1">Nucleoid</location>
    </subcellularLocation>
</comment>
<comment type="similarity">
    <text evidence="1">Belongs to the MraZ family.</text>
</comment>
<proteinExistence type="inferred from homology"/>
<sequence length="143" mass="16897">MFMGEFQHQLDAKGRMIVPAKFREELTEHFVITRGLDKCLFGYTLTEWAAIEEKLKALPLTRRDARKFMRMFFSGAVEVEMDKQGRINIPKHLMEYAGLSKEATVIGVSSRIEIWDRKLWSDFYEETEEEFETIAEELIDFDF</sequence>
<feature type="chain" id="PRO_1000148861" description="Transcriptional regulator MraZ">
    <location>
        <begin position="1"/>
        <end position="143"/>
    </location>
</feature>
<feature type="domain" description="SpoVT-AbrB 1" evidence="2">
    <location>
        <begin position="5"/>
        <end position="47"/>
    </location>
</feature>
<feature type="domain" description="SpoVT-AbrB 2" evidence="2">
    <location>
        <begin position="76"/>
        <end position="119"/>
    </location>
</feature>
<keyword id="KW-0963">Cytoplasm</keyword>
<keyword id="KW-0238">DNA-binding</keyword>
<keyword id="KW-1185">Reference proteome</keyword>
<keyword id="KW-0677">Repeat</keyword>
<keyword id="KW-0804">Transcription</keyword>
<keyword id="KW-0805">Transcription regulation</keyword>
<organism>
    <name type="scientific">Macrococcus caseolyticus (strain JCSC5402)</name>
    <name type="common">Macrococcoides caseolyticum</name>
    <dbReference type="NCBI Taxonomy" id="458233"/>
    <lineage>
        <taxon>Bacteria</taxon>
        <taxon>Bacillati</taxon>
        <taxon>Bacillota</taxon>
        <taxon>Bacilli</taxon>
        <taxon>Bacillales</taxon>
        <taxon>Staphylococcaceae</taxon>
        <taxon>Macrococcoides</taxon>
    </lineage>
</organism>
<evidence type="ECO:0000255" key="1">
    <source>
        <dbReference type="HAMAP-Rule" id="MF_01008"/>
    </source>
</evidence>
<evidence type="ECO:0000255" key="2">
    <source>
        <dbReference type="PROSITE-ProRule" id="PRU01076"/>
    </source>
</evidence>
<dbReference type="EMBL" id="AP009484">
    <property type="protein sequence ID" value="BAH17457.1"/>
    <property type="molecule type" value="Genomic_DNA"/>
</dbReference>
<dbReference type="RefSeq" id="WP_012656658.1">
    <property type="nucleotide sequence ID" value="NC_011999.1"/>
</dbReference>
<dbReference type="SMR" id="B9EB46"/>
<dbReference type="STRING" id="458233.MCCL_0750"/>
<dbReference type="KEGG" id="mcl:MCCL_0750"/>
<dbReference type="eggNOG" id="COG2001">
    <property type="taxonomic scope" value="Bacteria"/>
</dbReference>
<dbReference type="HOGENOM" id="CLU_107907_0_5_9"/>
<dbReference type="OrthoDB" id="9807753at2"/>
<dbReference type="Proteomes" id="UP000001383">
    <property type="component" value="Chromosome"/>
</dbReference>
<dbReference type="GO" id="GO:0005737">
    <property type="term" value="C:cytoplasm"/>
    <property type="evidence" value="ECO:0007669"/>
    <property type="project" value="UniProtKB-UniRule"/>
</dbReference>
<dbReference type="GO" id="GO:0009295">
    <property type="term" value="C:nucleoid"/>
    <property type="evidence" value="ECO:0007669"/>
    <property type="project" value="UniProtKB-SubCell"/>
</dbReference>
<dbReference type="GO" id="GO:0003700">
    <property type="term" value="F:DNA-binding transcription factor activity"/>
    <property type="evidence" value="ECO:0007669"/>
    <property type="project" value="UniProtKB-UniRule"/>
</dbReference>
<dbReference type="GO" id="GO:0000976">
    <property type="term" value="F:transcription cis-regulatory region binding"/>
    <property type="evidence" value="ECO:0007669"/>
    <property type="project" value="TreeGrafter"/>
</dbReference>
<dbReference type="GO" id="GO:2000143">
    <property type="term" value="P:negative regulation of DNA-templated transcription initiation"/>
    <property type="evidence" value="ECO:0007669"/>
    <property type="project" value="TreeGrafter"/>
</dbReference>
<dbReference type="CDD" id="cd16321">
    <property type="entry name" value="MraZ_C"/>
    <property type="match status" value="1"/>
</dbReference>
<dbReference type="CDD" id="cd16320">
    <property type="entry name" value="MraZ_N"/>
    <property type="match status" value="1"/>
</dbReference>
<dbReference type="FunFam" id="3.40.1550.20:FF:000002">
    <property type="entry name" value="Transcriptional regulator MraZ"/>
    <property type="match status" value="1"/>
</dbReference>
<dbReference type="Gene3D" id="3.40.1550.20">
    <property type="entry name" value="Transcriptional regulator MraZ domain"/>
    <property type="match status" value="1"/>
</dbReference>
<dbReference type="HAMAP" id="MF_01008">
    <property type="entry name" value="MraZ"/>
    <property type="match status" value="1"/>
</dbReference>
<dbReference type="InterPro" id="IPR003444">
    <property type="entry name" value="MraZ"/>
</dbReference>
<dbReference type="InterPro" id="IPR035644">
    <property type="entry name" value="MraZ_C"/>
</dbReference>
<dbReference type="InterPro" id="IPR020603">
    <property type="entry name" value="MraZ_dom"/>
</dbReference>
<dbReference type="InterPro" id="IPR035642">
    <property type="entry name" value="MraZ_N"/>
</dbReference>
<dbReference type="InterPro" id="IPR038619">
    <property type="entry name" value="MraZ_sf"/>
</dbReference>
<dbReference type="InterPro" id="IPR007159">
    <property type="entry name" value="SpoVT-AbrB_dom"/>
</dbReference>
<dbReference type="InterPro" id="IPR037914">
    <property type="entry name" value="SpoVT-AbrB_sf"/>
</dbReference>
<dbReference type="NCBIfam" id="TIGR00242">
    <property type="entry name" value="division/cell wall cluster transcriptional repressor MraZ"/>
    <property type="match status" value="1"/>
</dbReference>
<dbReference type="PANTHER" id="PTHR34701">
    <property type="entry name" value="TRANSCRIPTIONAL REGULATOR MRAZ"/>
    <property type="match status" value="1"/>
</dbReference>
<dbReference type="PANTHER" id="PTHR34701:SF1">
    <property type="entry name" value="TRANSCRIPTIONAL REGULATOR MRAZ"/>
    <property type="match status" value="1"/>
</dbReference>
<dbReference type="Pfam" id="PF02381">
    <property type="entry name" value="MraZ"/>
    <property type="match status" value="2"/>
</dbReference>
<dbReference type="SUPFAM" id="SSF89447">
    <property type="entry name" value="AbrB/MazE/MraZ-like"/>
    <property type="match status" value="1"/>
</dbReference>
<dbReference type="PROSITE" id="PS51740">
    <property type="entry name" value="SPOVT_ABRB"/>
    <property type="match status" value="2"/>
</dbReference>
<accession>B9EB46</accession>
<protein>
    <recommendedName>
        <fullName>Transcriptional regulator MraZ</fullName>
    </recommendedName>
</protein>